<dbReference type="EC" id="2.1.1.33" evidence="2"/>
<dbReference type="EMBL" id="CP000414">
    <property type="protein sequence ID" value="ABJ62323.1"/>
    <property type="molecule type" value="Genomic_DNA"/>
</dbReference>
<dbReference type="RefSeq" id="WP_011679948.1">
    <property type="nucleotide sequence ID" value="NC_008531.1"/>
</dbReference>
<dbReference type="SMR" id="Q03WU9"/>
<dbReference type="EnsemblBacteria" id="ABJ62323">
    <property type="protein sequence ID" value="ABJ62323"/>
    <property type="gene ID" value="LEUM_1225"/>
</dbReference>
<dbReference type="GeneID" id="29576019"/>
<dbReference type="KEGG" id="lme:LEUM_1225"/>
<dbReference type="eggNOG" id="COG0220">
    <property type="taxonomic scope" value="Bacteria"/>
</dbReference>
<dbReference type="HOGENOM" id="CLU_050910_2_1_9"/>
<dbReference type="UniPathway" id="UPA00989"/>
<dbReference type="Proteomes" id="UP000000362">
    <property type="component" value="Chromosome"/>
</dbReference>
<dbReference type="GO" id="GO:0043527">
    <property type="term" value="C:tRNA methyltransferase complex"/>
    <property type="evidence" value="ECO:0007669"/>
    <property type="project" value="TreeGrafter"/>
</dbReference>
<dbReference type="GO" id="GO:0008176">
    <property type="term" value="F:tRNA (guanine(46)-N7)-methyltransferase activity"/>
    <property type="evidence" value="ECO:0007669"/>
    <property type="project" value="UniProtKB-UniRule"/>
</dbReference>
<dbReference type="CDD" id="cd02440">
    <property type="entry name" value="AdoMet_MTases"/>
    <property type="match status" value="1"/>
</dbReference>
<dbReference type="FunFam" id="3.40.50.150:FF:000035">
    <property type="entry name" value="tRNA (guanine-N(7)-)-methyltransferase"/>
    <property type="match status" value="1"/>
</dbReference>
<dbReference type="Gene3D" id="3.40.50.150">
    <property type="entry name" value="Vaccinia Virus protein VP39"/>
    <property type="match status" value="1"/>
</dbReference>
<dbReference type="HAMAP" id="MF_01057">
    <property type="entry name" value="tRNA_methyltr_TrmB"/>
    <property type="match status" value="1"/>
</dbReference>
<dbReference type="InterPro" id="IPR029063">
    <property type="entry name" value="SAM-dependent_MTases_sf"/>
</dbReference>
<dbReference type="InterPro" id="IPR003358">
    <property type="entry name" value="tRNA_(Gua-N-7)_MeTrfase_Trmb"/>
</dbReference>
<dbReference type="InterPro" id="IPR055361">
    <property type="entry name" value="tRNA_methyltr_TrmB_bact"/>
</dbReference>
<dbReference type="NCBIfam" id="NF001080">
    <property type="entry name" value="PRK00121.2-2"/>
    <property type="match status" value="1"/>
</dbReference>
<dbReference type="NCBIfam" id="TIGR00091">
    <property type="entry name" value="tRNA (guanosine(46)-N7)-methyltransferase TrmB"/>
    <property type="match status" value="1"/>
</dbReference>
<dbReference type="PANTHER" id="PTHR23417">
    <property type="entry name" value="3-DEOXY-D-MANNO-OCTULOSONIC-ACID TRANSFERASE/TRNA GUANINE-N 7 - -METHYLTRANSFERASE"/>
    <property type="match status" value="1"/>
</dbReference>
<dbReference type="PANTHER" id="PTHR23417:SF14">
    <property type="entry name" value="PENTACOTRIPEPTIDE-REPEAT REGION OF PRORP DOMAIN-CONTAINING PROTEIN"/>
    <property type="match status" value="1"/>
</dbReference>
<dbReference type="Pfam" id="PF02390">
    <property type="entry name" value="Methyltransf_4"/>
    <property type="match status" value="1"/>
</dbReference>
<dbReference type="SUPFAM" id="SSF53335">
    <property type="entry name" value="S-adenosyl-L-methionine-dependent methyltransferases"/>
    <property type="match status" value="1"/>
</dbReference>
<dbReference type="PROSITE" id="PS51625">
    <property type="entry name" value="SAM_MT_TRMB"/>
    <property type="match status" value="1"/>
</dbReference>
<proteinExistence type="inferred from homology"/>
<keyword id="KW-0489">Methyltransferase</keyword>
<keyword id="KW-1185">Reference proteome</keyword>
<keyword id="KW-0949">S-adenosyl-L-methionine</keyword>
<keyword id="KW-0808">Transferase</keyword>
<keyword id="KW-0819">tRNA processing</keyword>
<reference key="1">
    <citation type="journal article" date="2006" name="Proc. Natl. Acad. Sci. U.S.A.">
        <title>Comparative genomics of the lactic acid bacteria.</title>
        <authorList>
            <person name="Makarova K.S."/>
            <person name="Slesarev A."/>
            <person name="Wolf Y.I."/>
            <person name="Sorokin A."/>
            <person name="Mirkin B."/>
            <person name="Koonin E.V."/>
            <person name="Pavlov A."/>
            <person name="Pavlova N."/>
            <person name="Karamychev V."/>
            <person name="Polouchine N."/>
            <person name="Shakhova V."/>
            <person name="Grigoriev I."/>
            <person name="Lou Y."/>
            <person name="Rohksar D."/>
            <person name="Lucas S."/>
            <person name="Huang K."/>
            <person name="Goodstein D.M."/>
            <person name="Hawkins T."/>
            <person name="Plengvidhya V."/>
            <person name="Welker D."/>
            <person name="Hughes J."/>
            <person name="Goh Y."/>
            <person name="Benson A."/>
            <person name="Baldwin K."/>
            <person name="Lee J.-H."/>
            <person name="Diaz-Muniz I."/>
            <person name="Dosti B."/>
            <person name="Smeianov V."/>
            <person name="Wechter W."/>
            <person name="Barabote R."/>
            <person name="Lorca G."/>
            <person name="Altermann E."/>
            <person name="Barrangou R."/>
            <person name="Ganesan B."/>
            <person name="Xie Y."/>
            <person name="Rawsthorne H."/>
            <person name="Tamir D."/>
            <person name="Parker C."/>
            <person name="Breidt F."/>
            <person name="Broadbent J.R."/>
            <person name="Hutkins R."/>
            <person name="O'Sullivan D."/>
            <person name="Steele J."/>
            <person name="Unlu G."/>
            <person name="Saier M.H. Jr."/>
            <person name="Klaenhammer T."/>
            <person name="Richardson P."/>
            <person name="Kozyavkin S."/>
            <person name="Weimer B.C."/>
            <person name="Mills D.A."/>
        </authorList>
    </citation>
    <scope>NUCLEOTIDE SEQUENCE [LARGE SCALE GENOMIC DNA]</scope>
    <source>
        <strain>ATCC 8293 / DSM 20343 / BCRC 11652 / CCM 1803 / JCM 6124 / NCDO 523 / NBRC 100496 / NCIMB 8023 / NCTC 12954 / NRRL B-1118 / 37Y</strain>
    </source>
</reference>
<name>TRMB_LEUMM</name>
<protein>
    <recommendedName>
        <fullName evidence="2">tRNA (guanine-N(7)-)-methyltransferase</fullName>
        <ecNumber evidence="2">2.1.1.33</ecNumber>
    </recommendedName>
    <alternativeName>
        <fullName evidence="2">tRNA (guanine(46)-N(7))-methyltransferase</fullName>
    </alternativeName>
    <alternativeName>
        <fullName evidence="2">tRNA(m7G46)-methyltransferase</fullName>
    </alternativeName>
</protein>
<feature type="chain" id="PRO_0000288171" description="tRNA (guanine-N(7)-)-methyltransferase">
    <location>
        <begin position="1"/>
        <end position="219"/>
    </location>
</feature>
<feature type="active site" evidence="1">
    <location>
        <position position="122"/>
    </location>
</feature>
<feature type="binding site" evidence="2">
    <location>
        <position position="46"/>
    </location>
    <ligand>
        <name>S-adenosyl-L-methionine</name>
        <dbReference type="ChEBI" id="CHEBI:59789"/>
    </ligand>
</feature>
<feature type="binding site" evidence="2">
    <location>
        <position position="71"/>
    </location>
    <ligand>
        <name>S-adenosyl-L-methionine</name>
        <dbReference type="ChEBI" id="CHEBI:59789"/>
    </ligand>
</feature>
<feature type="binding site" evidence="2">
    <location>
        <position position="100"/>
    </location>
    <ligand>
        <name>S-adenosyl-L-methionine</name>
        <dbReference type="ChEBI" id="CHEBI:59789"/>
    </ligand>
</feature>
<feature type="binding site" evidence="2">
    <location>
        <position position="122"/>
    </location>
    <ligand>
        <name>S-adenosyl-L-methionine</name>
        <dbReference type="ChEBI" id="CHEBI:59789"/>
    </ligand>
</feature>
<feature type="binding site" evidence="2">
    <location>
        <position position="126"/>
    </location>
    <ligand>
        <name>substrate</name>
    </ligand>
</feature>
<feature type="binding site" evidence="2">
    <location>
        <position position="158"/>
    </location>
    <ligand>
        <name>substrate</name>
    </ligand>
</feature>
<feature type="binding site" evidence="2">
    <location>
        <begin position="199"/>
        <end position="202"/>
    </location>
    <ligand>
        <name>substrate</name>
    </ligand>
</feature>
<comment type="function">
    <text evidence="2">Catalyzes the formation of N(7)-methylguanine at position 46 (m7G46) in tRNA.</text>
</comment>
<comment type="catalytic activity">
    <reaction evidence="2">
        <text>guanosine(46) in tRNA + S-adenosyl-L-methionine = N(7)-methylguanosine(46) in tRNA + S-adenosyl-L-homocysteine</text>
        <dbReference type="Rhea" id="RHEA:42708"/>
        <dbReference type="Rhea" id="RHEA-COMP:10188"/>
        <dbReference type="Rhea" id="RHEA-COMP:10189"/>
        <dbReference type="ChEBI" id="CHEBI:57856"/>
        <dbReference type="ChEBI" id="CHEBI:59789"/>
        <dbReference type="ChEBI" id="CHEBI:74269"/>
        <dbReference type="ChEBI" id="CHEBI:74480"/>
        <dbReference type="EC" id="2.1.1.33"/>
    </reaction>
</comment>
<comment type="pathway">
    <text evidence="2">tRNA modification; N(7)-methylguanine-tRNA biosynthesis.</text>
</comment>
<comment type="similarity">
    <text evidence="2">Belongs to the class I-like SAM-binding methyltransferase superfamily. TrmB family.</text>
</comment>
<sequence length="219" mass="25462">MHLRSKPWASDWLAEHSDIVIDQDRATAQIGQWQSLFDQEQPIHLEIGSGKGQFILGMALAHPEINYIGMEIQETAIAIAARKSFDQVGTLPNLRYIYGNGNGVETYFEKGEVSKVYLNFSDPWPKKRHESRRLTYKSFLKSYEAVLPEHGEVEFKTDNRHLFEYSMVSFMDYGMRWTPEDYTLDLHADEDKVQGNVETEYEQKFMAKGQPIYKIKAHF</sequence>
<gene>
    <name evidence="2" type="primary">trmB</name>
    <name type="ordered locus">LEUM_1225</name>
</gene>
<accession>Q03WU9</accession>
<evidence type="ECO:0000250" key="1"/>
<evidence type="ECO:0000255" key="2">
    <source>
        <dbReference type="HAMAP-Rule" id="MF_01057"/>
    </source>
</evidence>
<organism>
    <name type="scientific">Leuconostoc mesenteroides subsp. mesenteroides (strain ATCC 8293 / DSM 20343 / BCRC 11652 / CCM 1803 / JCM 6124 / NCDO 523 / NBRC 100496 / NCIMB 8023 / NCTC 12954 / NRRL B-1118 / 37Y)</name>
    <dbReference type="NCBI Taxonomy" id="203120"/>
    <lineage>
        <taxon>Bacteria</taxon>
        <taxon>Bacillati</taxon>
        <taxon>Bacillota</taxon>
        <taxon>Bacilli</taxon>
        <taxon>Lactobacillales</taxon>
        <taxon>Lactobacillaceae</taxon>
        <taxon>Leuconostoc</taxon>
    </lineage>
</organism>